<keyword id="KW-1003">Cell membrane</keyword>
<keyword id="KW-0407">Ion channel</keyword>
<keyword id="KW-0406">Ion transport</keyword>
<keyword id="KW-0472">Membrane</keyword>
<keyword id="KW-0479">Metal-binding</keyword>
<keyword id="KW-1185">Reference proteome</keyword>
<keyword id="KW-0915">Sodium</keyword>
<keyword id="KW-0812">Transmembrane</keyword>
<keyword id="KW-1133">Transmembrane helix</keyword>
<keyword id="KW-0813">Transport</keyword>
<evidence type="ECO:0000255" key="1">
    <source>
        <dbReference type="HAMAP-Rule" id="MF_00454"/>
    </source>
</evidence>
<proteinExistence type="inferred from homology"/>
<gene>
    <name evidence="1" type="primary">fluC</name>
    <name evidence="1" type="synonym">crcB</name>
    <name type="ordered locus">Caur_2471</name>
</gene>
<protein>
    <recommendedName>
        <fullName evidence="1">Fluoride-specific ion channel FluC</fullName>
    </recommendedName>
</protein>
<dbReference type="EMBL" id="CP000909">
    <property type="protein sequence ID" value="ABY35678.1"/>
    <property type="molecule type" value="Genomic_DNA"/>
</dbReference>
<dbReference type="RefSeq" id="WP_012258331.1">
    <property type="nucleotide sequence ID" value="NC_010175.1"/>
</dbReference>
<dbReference type="RefSeq" id="YP_001636067.1">
    <property type="nucleotide sequence ID" value="NC_010175.1"/>
</dbReference>
<dbReference type="SMR" id="A9WHY7"/>
<dbReference type="FunCoup" id="A9WHY7">
    <property type="interactions" value="226"/>
</dbReference>
<dbReference type="STRING" id="324602.Caur_2471"/>
<dbReference type="EnsemblBacteria" id="ABY35678">
    <property type="protein sequence ID" value="ABY35678"/>
    <property type="gene ID" value="Caur_2471"/>
</dbReference>
<dbReference type="KEGG" id="cau:Caur_2471"/>
<dbReference type="PATRIC" id="fig|324602.8.peg.2786"/>
<dbReference type="eggNOG" id="COG0239">
    <property type="taxonomic scope" value="Bacteria"/>
</dbReference>
<dbReference type="HOGENOM" id="CLU_114342_2_3_0"/>
<dbReference type="InParanoid" id="A9WHY7"/>
<dbReference type="Proteomes" id="UP000002008">
    <property type="component" value="Chromosome"/>
</dbReference>
<dbReference type="GO" id="GO:0005886">
    <property type="term" value="C:plasma membrane"/>
    <property type="evidence" value="ECO:0000318"/>
    <property type="project" value="GO_Central"/>
</dbReference>
<dbReference type="GO" id="GO:0062054">
    <property type="term" value="F:fluoride channel activity"/>
    <property type="evidence" value="ECO:0007669"/>
    <property type="project" value="UniProtKB-UniRule"/>
</dbReference>
<dbReference type="GO" id="GO:1903425">
    <property type="term" value="F:fluoride transmembrane transporter activity"/>
    <property type="evidence" value="ECO:0000318"/>
    <property type="project" value="GO_Central"/>
</dbReference>
<dbReference type="GO" id="GO:0046872">
    <property type="term" value="F:metal ion binding"/>
    <property type="evidence" value="ECO:0007669"/>
    <property type="project" value="UniProtKB-KW"/>
</dbReference>
<dbReference type="GO" id="GO:0140114">
    <property type="term" value="P:cellular detoxification of fluoride"/>
    <property type="evidence" value="ECO:0007669"/>
    <property type="project" value="UniProtKB-UniRule"/>
</dbReference>
<dbReference type="GO" id="GO:1903424">
    <property type="term" value="P:fluoride transmembrane transport"/>
    <property type="evidence" value="ECO:0000318"/>
    <property type="project" value="GO_Central"/>
</dbReference>
<dbReference type="HAMAP" id="MF_00454">
    <property type="entry name" value="FluC"/>
    <property type="match status" value="1"/>
</dbReference>
<dbReference type="InterPro" id="IPR003691">
    <property type="entry name" value="FluC"/>
</dbReference>
<dbReference type="NCBIfam" id="TIGR00494">
    <property type="entry name" value="crcB"/>
    <property type="match status" value="1"/>
</dbReference>
<dbReference type="PANTHER" id="PTHR28259">
    <property type="entry name" value="FLUORIDE EXPORT PROTEIN 1-RELATED"/>
    <property type="match status" value="1"/>
</dbReference>
<dbReference type="PANTHER" id="PTHR28259:SF1">
    <property type="entry name" value="FLUORIDE EXPORT PROTEIN 1-RELATED"/>
    <property type="match status" value="1"/>
</dbReference>
<dbReference type="Pfam" id="PF02537">
    <property type="entry name" value="CRCB"/>
    <property type="match status" value="1"/>
</dbReference>
<feature type="chain" id="PRO_1000081009" description="Fluoride-specific ion channel FluC">
    <location>
        <begin position="1"/>
        <end position="126"/>
    </location>
</feature>
<feature type="transmembrane region" description="Helical" evidence="1">
    <location>
        <begin position="4"/>
        <end position="24"/>
    </location>
</feature>
<feature type="transmembrane region" description="Helical" evidence="1">
    <location>
        <begin position="35"/>
        <end position="55"/>
    </location>
</feature>
<feature type="transmembrane region" description="Helical" evidence="1">
    <location>
        <begin position="68"/>
        <end position="88"/>
    </location>
</feature>
<feature type="transmembrane region" description="Helical" evidence="1">
    <location>
        <begin position="100"/>
        <end position="120"/>
    </location>
</feature>
<feature type="binding site" evidence="1">
    <location>
        <position position="75"/>
    </location>
    <ligand>
        <name>Na(+)</name>
        <dbReference type="ChEBI" id="CHEBI:29101"/>
        <note>structural</note>
    </ligand>
</feature>
<feature type="binding site" evidence="1">
    <location>
        <position position="78"/>
    </location>
    <ligand>
        <name>Na(+)</name>
        <dbReference type="ChEBI" id="CHEBI:29101"/>
        <note>structural</note>
    </ligand>
</feature>
<organism>
    <name type="scientific">Chloroflexus aurantiacus (strain ATCC 29366 / DSM 635 / J-10-fl)</name>
    <dbReference type="NCBI Taxonomy" id="324602"/>
    <lineage>
        <taxon>Bacteria</taxon>
        <taxon>Bacillati</taxon>
        <taxon>Chloroflexota</taxon>
        <taxon>Chloroflexia</taxon>
        <taxon>Chloroflexales</taxon>
        <taxon>Chloroflexineae</taxon>
        <taxon>Chloroflexaceae</taxon>
        <taxon>Chloroflexus</taxon>
    </lineage>
</organism>
<sequence length="126" mass="13143">MNNILAIALGAAIGANLRYGIGLWAAQRFGTAWPYGTFIINLLGCLGIGLLLTLISTRLTLSEPVRLMLVTGLLGGFTTFSTFGYESFSLLSSGNWLPAIGYMVGSVVGGLIAVIIGVGLGRWFGG</sequence>
<name>FLUC_CHLAA</name>
<comment type="function">
    <text evidence="1">Fluoride-specific ion channel. Important for reducing fluoride concentration in the cell, thus reducing its toxicity.</text>
</comment>
<comment type="catalytic activity">
    <reaction evidence="1">
        <text>fluoride(in) = fluoride(out)</text>
        <dbReference type="Rhea" id="RHEA:76159"/>
        <dbReference type="ChEBI" id="CHEBI:17051"/>
    </reaction>
    <physiologicalReaction direction="left-to-right" evidence="1">
        <dbReference type="Rhea" id="RHEA:76160"/>
    </physiologicalReaction>
</comment>
<comment type="activity regulation">
    <text evidence="1">Na(+) is not transported, but it plays an essential structural role and its presence is essential for fluoride channel function.</text>
</comment>
<comment type="subcellular location">
    <subcellularLocation>
        <location evidence="1">Cell membrane</location>
        <topology evidence="1">Multi-pass membrane protein</topology>
    </subcellularLocation>
</comment>
<comment type="similarity">
    <text evidence="1">Belongs to the fluoride channel Fluc/FEX (TC 1.A.43) family.</text>
</comment>
<reference key="1">
    <citation type="journal article" date="2011" name="BMC Genomics">
        <title>Complete genome sequence of the filamentous anoxygenic phototrophic bacterium Chloroflexus aurantiacus.</title>
        <authorList>
            <person name="Tang K.H."/>
            <person name="Barry K."/>
            <person name="Chertkov O."/>
            <person name="Dalin E."/>
            <person name="Han C.S."/>
            <person name="Hauser L.J."/>
            <person name="Honchak B.M."/>
            <person name="Karbach L.E."/>
            <person name="Land M.L."/>
            <person name="Lapidus A."/>
            <person name="Larimer F.W."/>
            <person name="Mikhailova N."/>
            <person name="Pitluck S."/>
            <person name="Pierson B.K."/>
            <person name="Blankenship R.E."/>
        </authorList>
    </citation>
    <scope>NUCLEOTIDE SEQUENCE [LARGE SCALE GENOMIC DNA]</scope>
    <source>
        <strain>ATCC 29366 / DSM 635 / J-10-fl</strain>
    </source>
</reference>
<accession>A9WHY7</accession>